<gene>
    <name type="primary">ERMARD</name>
    <name type="ORF">QtsA-18153</name>
</gene>
<sequence length="668" mass="76525">VLIGDPITTCLSPSVYDIICNLGFQLRENCDINSIVTQNGEVCWKTITDCVSYTESDQGLDYWGSVRLLGPVCEAVHSHFLSLTKGQFEIRYAPWFQWTSFPELFPEIFDALESLQSPAISLSLMKLTSCLERALGDVFLLIGKECPFLLRDLLASEELAQVFGQSVMNVLKVFVGSPCGLNLRNVLWHGFASPEEVPPKYCSMMMLLTAGLGQLLKSYLQKTKLTLAHRSFITPTNLEDLIVFPDVTYEVLSVLEEAMTKSAFILKIMLPYWEVALVKFKSHRFADCAILLLTQLETGLRNVFATLNRCPQRLLTAEILAKHLNDGKINQLPLFLGEPAMEFLWDFLNHQEGPRIRDHLSHGEINLHEFSKETTNQLLAFSVVLLLRFVDEGLLSVFKEKASVELLISLAEGYSSRCHPVFQLKKQVLSCEESIRVWALLPFPKELTWEAVRLEDNSETNACHSLITKMTDELYHHMPEDHCVLKDLDHLPTETWPQLLHELCSTPVRTLFCPRIVLEVLVVLRSIGKQCHRVSGQVTIASELRHRQWVERTLRSRQRQNYLRMWSSIRLLSPVLSLILFLITLELVNVHAVCGKNAHEYQQYLKFVKSILQYTENLVAYTSYEKNKWNETINLTHTVLLKIWTFSEKKQMLIHLAKKSTSKVLMKT</sequence>
<name>EMARD_MACFA</name>
<organism>
    <name type="scientific">Macaca fascicularis</name>
    <name type="common">Crab-eating macaque</name>
    <name type="synonym">Cynomolgus monkey</name>
    <dbReference type="NCBI Taxonomy" id="9541"/>
    <lineage>
        <taxon>Eukaryota</taxon>
        <taxon>Metazoa</taxon>
        <taxon>Chordata</taxon>
        <taxon>Craniata</taxon>
        <taxon>Vertebrata</taxon>
        <taxon>Euteleostomi</taxon>
        <taxon>Mammalia</taxon>
        <taxon>Eutheria</taxon>
        <taxon>Euarchontoglires</taxon>
        <taxon>Primates</taxon>
        <taxon>Haplorrhini</taxon>
        <taxon>Catarrhini</taxon>
        <taxon>Cercopithecidae</taxon>
        <taxon>Cercopithecinae</taxon>
        <taxon>Macaca</taxon>
    </lineage>
</organism>
<accession>Q4R6F2</accession>
<protein>
    <recommendedName>
        <fullName>Endoplasmic reticulum membrane-associated RNA degradation protein</fullName>
        <shortName>ER membrane-associated RNA degradation protein</shortName>
    </recommendedName>
</protein>
<reference key="1">
    <citation type="submission" date="2005-06" db="EMBL/GenBank/DDBJ databases">
        <title>DNA sequences of macaque genes expressed in brain or testis and its evolutionary implications.</title>
        <authorList>
            <consortium name="International consortium for macaque cDNA sequencing and analysis"/>
        </authorList>
    </citation>
    <scope>NUCLEOTIDE SEQUENCE [LARGE SCALE MRNA]</scope>
    <source>
        <tissue>Testis</tissue>
    </source>
</reference>
<proteinExistence type="evidence at transcript level"/>
<dbReference type="EMBL" id="AB169231">
    <property type="protein sequence ID" value="BAE01323.1"/>
    <property type="molecule type" value="mRNA"/>
</dbReference>
<dbReference type="STRING" id="9541.ENSMFAP00000000370"/>
<dbReference type="eggNOG" id="ENOG502QS21">
    <property type="taxonomic scope" value="Eukaryota"/>
</dbReference>
<dbReference type="Proteomes" id="UP000233100">
    <property type="component" value="Unplaced"/>
</dbReference>
<dbReference type="GO" id="GO:0005789">
    <property type="term" value="C:endoplasmic reticulum membrane"/>
    <property type="evidence" value="ECO:0007669"/>
    <property type="project" value="UniProtKB-SubCell"/>
</dbReference>
<dbReference type="InterPro" id="IPR025209">
    <property type="entry name" value="DUF4209"/>
</dbReference>
<dbReference type="InterPro" id="IPR039635">
    <property type="entry name" value="ERMARD"/>
</dbReference>
<dbReference type="PANTHER" id="PTHR31701">
    <property type="entry name" value="ENDOPLASMIC RETICULUM MEMBRANE-ASSOCIATED RNA DEGRADATION PROTEIN"/>
    <property type="match status" value="1"/>
</dbReference>
<dbReference type="PANTHER" id="PTHR31701:SF2">
    <property type="entry name" value="ENDOPLASMIC RETICULUM MEMBRANE-ASSOCIATED RNA DEGRADATION PROTEIN"/>
    <property type="match status" value="1"/>
</dbReference>
<dbReference type="Pfam" id="PF13910">
    <property type="entry name" value="DUF4209"/>
    <property type="match status" value="1"/>
</dbReference>
<feature type="chain" id="PRO_0000295627" description="Endoplasmic reticulum membrane-associated RNA degradation protein">
    <location>
        <begin position="1" status="less than"/>
        <end position="668"/>
    </location>
</feature>
<feature type="transmembrane region" description="Helical" evidence="2">
    <location>
        <begin position="378"/>
        <end position="398"/>
    </location>
</feature>
<feature type="transmembrane region" description="Helical" evidence="2">
    <location>
        <begin position="575"/>
        <end position="595"/>
    </location>
</feature>
<feature type="non-terminal residue">
    <location>
        <position position="1"/>
    </location>
</feature>
<comment type="function">
    <text evidence="1">May play a role in neuronal migration during embryonic development.</text>
</comment>
<comment type="subcellular location">
    <subcellularLocation>
        <location evidence="1">Endoplasmic reticulum membrane</location>
        <topology evidence="1">Multi-pass membrane protein</topology>
    </subcellularLocation>
</comment>
<evidence type="ECO:0000250" key="1"/>
<evidence type="ECO:0000255" key="2"/>
<keyword id="KW-0217">Developmental protein</keyword>
<keyword id="KW-0256">Endoplasmic reticulum</keyword>
<keyword id="KW-0472">Membrane</keyword>
<keyword id="KW-1185">Reference proteome</keyword>
<keyword id="KW-0812">Transmembrane</keyword>
<keyword id="KW-1133">Transmembrane helix</keyword>